<organism>
    <name type="scientific">Pseudomonas fluorescens (strain Pf0-1)</name>
    <dbReference type="NCBI Taxonomy" id="205922"/>
    <lineage>
        <taxon>Bacteria</taxon>
        <taxon>Pseudomonadati</taxon>
        <taxon>Pseudomonadota</taxon>
        <taxon>Gammaproteobacteria</taxon>
        <taxon>Pseudomonadales</taxon>
        <taxon>Pseudomonadaceae</taxon>
        <taxon>Pseudomonas</taxon>
    </lineage>
</organism>
<sequence length="366" mass="39833">MQTLKVDLGERSYPIHIGEGLLDQPELLAPHIHGRQVAIISNETVAPLYLERLTRSLAQFSVVSVVLPDGEAFKNWETLQLIFDGLLTARHDRRTTVIALGGGVIGDMAGFAAACYQRGVDFIQIPTTLLSQVDSSVGGKTGINHPLGKNMVGAFYQPNVVLIDTASLKTLPARELSAGLAEVIKYGLICDEPFLTWLEDNVDALRALDQTALTYAIERSCAAKAAVVGADEKETGVRATLNLGHTFGHAIETHMGYGVWLHGEAVAAGTVMALEMSARLGWISEQERDRGIRLFQRAGLPVIPPEEMTEADFLEHMAIDKKVIDGRLRLVLLRRMGEAVVTDDYPKEVLQATLGADYRALAQLKG</sequence>
<accession>Q3KJA1</accession>
<name>AROB_PSEPF</name>
<proteinExistence type="inferred from homology"/>
<gene>
    <name evidence="1" type="primary">aroB</name>
    <name type="ordered locus">Pfl01_0411</name>
</gene>
<feature type="chain" id="PRO_0000231115" description="3-dehydroquinate synthase">
    <location>
        <begin position="1"/>
        <end position="366"/>
    </location>
</feature>
<feature type="binding site" evidence="1">
    <location>
        <begin position="69"/>
        <end position="74"/>
    </location>
    <ligand>
        <name>NAD(+)</name>
        <dbReference type="ChEBI" id="CHEBI:57540"/>
    </ligand>
</feature>
<feature type="binding site" evidence="1">
    <location>
        <begin position="103"/>
        <end position="107"/>
    </location>
    <ligand>
        <name>NAD(+)</name>
        <dbReference type="ChEBI" id="CHEBI:57540"/>
    </ligand>
</feature>
<feature type="binding site" evidence="1">
    <location>
        <begin position="127"/>
        <end position="128"/>
    </location>
    <ligand>
        <name>NAD(+)</name>
        <dbReference type="ChEBI" id="CHEBI:57540"/>
    </ligand>
</feature>
<feature type="binding site" evidence="1">
    <location>
        <position position="140"/>
    </location>
    <ligand>
        <name>NAD(+)</name>
        <dbReference type="ChEBI" id="CHEBI:57540"/>
    </ligand>
</feature>
<feature type="binding site" evidence="1">
    <location>
        <position position="149"/>
    </location>
    <ligand>
        <name>NAD(+)</name>
        <dbReference type="ChEBI" id="CHEBI:57540"/>
    </ligand>
</feature>
<feature type="binding site" evidence="1">
    <location>
        <position position="182"/>
    </location>
    <ligand>
        <name>Zn(2+)</name>
        <dbReference type="ChEBI" id="CHEBI:29105"/>
    </ligand>
</feature>
<feature type="binding site" evidence="1">
    <location>
        <position position="245"/>
    </location>
    <ligand>
        <name>Zn(2+)</name>
        <dbReference type="ChEBI" id="CHEBI:29105"/>
    </ligand>
</feature>
<feature type="binding site" evidence="1">
    <location>
        <position position="262"/>
    </location>
    <ligand>
        <name>Zn(2+)</name>
        <dbReference type="ChEBI" id="CHEBI:29105"/>
    </ligand>
</feature>
<dbReference type="EC" id="4.2.3.4" evidence="1"/>
<dbReference type="EMBL" id="CP000094">
    <property type="protein sequence ID" value="ABA72155.1"/>
    <property type="molecule type" value="Genomic_DNA"/>
</dbReference>
<dbReference type="RefSeq" id="WP_011332082.1">
    <property type="nucleotide sequence ID" value="NC_007492.2"/>
</dbReference>
<dbReference type="SMR" id="Q3KJA1"/>
<dbReference type="KEGG" id="pfo:Pfl01_0411"/>
<dbReference type="eggNOG" id="COG0337">
    <property type="taxonomic scope" value="Bacteria"/>
</dbReference>
<dbReference type="HOGENOM" id="CLU_001201_0_2_6"/>
<dbReference type="UniPathway" id="UPA00053">
    <property type="reaction ID" value="UER00085"/>
</dbReference>
<dbReference type="Proteomes" id="UP000002704">
    <property type="component" value="Chromosome"/>
</dbReference>
<dbReference type="GO" id="GO:0005737">
    <property type="term" value="C:cytoplasm"/>
    <property type="evidence" value="ECO:0007669"/>
    <property type="project" value="UniProtKB-SubCell"/>
</dbReference>
<dbReference type="GO" id="GO:0003856">
    <property type="term" value="F:3-dehydroquinate synthase activity"/>
    <property type="evidence" value="ECO:0007669"/>
    <property type="project" value="UniProtKB-UniRule"/>
</dbReference>
<dbReference type="GO" id="GO:0046872">
    <property type="term" value="F:metal ion binding"/>
    <property type="evidence" value="ECO:0007669"/>
    <property type="project" value="UniProtKB-KW"/>
</dbReference>
<dbReference type="GO" id="GO:0000166">
    <property type="term" value="F:nucleotide binding"/>
    <property type="evidence" value="ECO:0007669"/>
    <property type="project" value="UniProtKB-KW"/>
</dbReference>
<dbReference type="GO" id="GO:0008652">
    <property type="term" value="P:amino acid biosynthetic process"/>
    <property type="evidence" value="ECO:0007669"/>
    <property type="project" value="UniProtKB-KW"/>
</dbReference>
<dbReference type="GO" id="GO:0009073">
    <property type="term" value="P:aromatic amino acid family biosynthetic process"/>
    <property type="evidence" value="ECO:0007669"/>
    <property type="project" value="UniProtKB-KW"/>
</dbReference>
<dbReference type="GO" id="GO:0009423">
    <property type="term" value="P:chorismate biosynthetic process"/>
    <property type="evidence" value="ECO:0007669"/>
    <property type="project" value="UniProtKB-UniRule"/>
</dbReference>
<dbReference type="CDD" id="cd08195">
    <property type="entry name" value="DHQS"/>
    <property type="match status" value="1"/>
</dbReference>
<dbReference type="FunFam" id="1.20.1090.10:FF:000002">
    <property type="entry name" value="3-dehydroquinate synthase"/>
    <property type="match status" value="1"/>
</dbReference>
<dbReference type="FunFam" id="3.40.50.1970:FF:000001">
    <property type="entry name" value="3-dehydroquinate synthase"/>
    <property type="match status" value="1"/>
</dbReference>
<dbReference type="Gene3D" id="3.40.50.1970">
    <property type="match status" value="1"/>
</dbReference>
<dbReference type="Gene3D" id="1.20.1090.10">
    <property type="entry name" value="Dehydroquinate synthase-like - alpha domain"/>
    <property type="match status" value="1"/>
</dbReference>
<dbReference type="HAMAP" id="MF_00110">
    <property type="entry name" value="DHQ_synthase"/>
    <property type="match status" value="1"/>
</dbReference>
<dbReference type="InterPro" id="IPR050071">
    <property type="entry name" value="Dehydroquinate_synthase"/>
</dbReference>
<dbReference type="InterPro" id="IPR016037">
    <property type="entry name" value="DHQ_synth_AroB"/>
</dbReference>
<dbReference type="InterPro" id="IPR030963">
    <property type="entry name" value="DHQ_synth_fam"/>
</dbReference>
<dbReference type="InterPro" id="IPR030960">
    <property type="entry name" value="DHQS/DOIS_N"/>
</dbReference>
<dbReference type="InterPro" id="IPR056179">
    <property type="entry name" value="DHQS_C"/>
</dbReference>
<dbReference type="NCBIfam" id="TIGR01357">
    <property type="entry name" value="aroB"/>
    <property type="match status" value="1"/>
</dbReference>
<dbReference type="PANTHER" id="PTHR43622">
    <property type="entry name" value="3-DEHYDROQUINATE SYNTHASE"/>
    <property type="match status" value="1"/>
</dbReference>
<dbReference type="PANTHER" id="PTHR43622:SF7">
    <property type="entry name" value="3-DEHYDROQUINATE SYNTHASE, CHLOROPLASTIC"/>
    <property type="match status" value="1"/>
</dbReference>
<dbReference type="Pfam" id="PF01761">
    <property type="entry name" value="DHQ_synthase"/>
    <property type="match status" value="1"/>
</dbReference>
<dbReference type="Pfam" id="PF24621">
    <property type="entry name" value="DHQS_C"/>
    <property type="match status" value="1"/>
</dbReference>
<dbReference type="PIRSF" id="PIRSF001455">
    <property type="entry name" value="DHQ_synth"/>
    <property type="match status" value="1"/>
</dbReference>
<dbReference type="SUPFAM" id="SSF56796">
    <property type="entry name" value="Dehydroquinate synthase-like"/>
    <property type="match status" value="1"/>
</dbReference>
<protein>
    <recommendedName>
        <fullName evidence="1">3-dehydroquinate synthase</fullName>
        <shortName evidence="1">DHQS</shortName>
        <ecNumber evidence="1">4.2.3.4</ecNumber>
    </recommendedName>
</protein>
<evidence type="ECO:0000255" key="1">
    <source>
        <dbReference type="HAMAP-Rule" id="MF_00110"/>
    </source>
</evidence>
<keyword id="KW-0028">Amino-acid biosynthesis</keyword>
<keyword id="KW-0057">Aromatic amino acid biosynthesis</keyword>
<keyword id="KW-0170">Cobalt</keyword>
<keyword id="KW-0963">Cytoplasm</keyword>
<keyword id="KW-0456">Lyase</keyword>
<keyword id="KW-0479">Metal-binding</keyword>
<keyword id="KW-0520">NAD</keyword>
<keyword id="KW-0547">Nucleotide-binding</keyword>
<keyword id="KW-0862">Zinc</keyword>
<comment type="function">
    <text evidence="1">Catalyzes the conversion of 3-deoxy-D-arabino-heptulosonate 7-phosphate (DAHP) to dehydroquinate (DHQ).</text>
</comment>
<comment type="catalytic activity">
    <reaction evidence="1">
        <text>7-phospho-2-dehydro-3-deoxy-D-arabino-heptonate = 3-dehydroquinate + phosphate</text>
        <dbReference type="Rhea" id="RHEA:21968"/>
        <dbReference type="ChEBI" id="CHEBI:32364"/>
        <dbReference type="ChEBI" id="CHEBI:43474"/>
        <dbReference type="ChEBI" id="CHEBI:58394"/>
        <dbReference type="EC" id="4.2.3.4"/>
    </reaction>
</comment>
<comment type="cofactor">
    <cofactor evidence="1">
        <name>Co(2+)</name>
        <dbReference type="ChEBI" id="CHEBI:48828"/>
    </cofactor>
    <cofactor evidence="1">
        <name>Zn(2+)</name>
        <dbReference type="ChEBI" id="CHEBI:29105"/>
    </cofactor>
    <text evidence="1">Binds 1 divalent metal cation per subunit. Can use either Co(2+) or Zn(2+).</text>
</comment>
<comment type="cofactor">
    <cofactor evidence="1">
        <name>NAD(+)</name>
        <dbReference type="ChEBI" id="CHEBI:57540"/>
    </cofactor>
</comment>
<comment type="pathway">
    <text evidence="1">Metabolic intermediate biosynthesis; chorismate biosynthesis; chorismate from D-erythrose 4-phosphate and phosphoenolpyruvate: step 2/7.</text>
</comment>
<comment type="subcellular location">
    <subcellularLocation>
        <location evidence="1">Cytoplasm</location>
    </subcellularLocation>
</comment>
<comment type="similarity">
    <text evidence="1">Belongs to the sugar phosphate cyclases superfamily. Dehydroquinate synthase family.</text>
</comment>
<reference key="1">
    <citation type="journal article" date="2009" name="Genome Biol.">
        <title>Genomic and genetic analyses of diversity and plant interactions of Pseudomonas fluorescens.</title>
        <authorList>
            <person name="Silby M.W."/>
            <person name="Cerdeno-Tarraga A.M."/>
            <person name="Vernikos G.S."/>
            <person name="Giddens S.R."/>
            <person name="Jackson R.W."/>
            <person name="Preston G.M."/>
            <person name="Zhang X.-X."/>
            <person name="Moon C.D."/>
            <person name="Gehrig S.M."/>
            <person name="Godfrey S.A.C."/>
            <person name="Knight C.G."/>
            <person name="Malone J.G."/>
            <person name="Robinson Z."/>
            <person name="Spiers A.J."/>
            <person name="Harris S."/>
            <person name="Challis G.L."/>
            <person name="Yaxley A.M."/>
            <person name="Harris D."/>
            <person name="Seeger K."/>
            <person name="Murphy L."/>
            <person name="Rutter S."/>
            <person name="Squares R."/>
            <person name="Quail M.A."/>
            <person name="Saunders E."/>
            <person name="Mavromatis K."/>
            <person name="Brettin T.S."/>
            <person name="Bentley S.D."/>
            <person name="Hothersall J."/>
            <person name="Stephens E."/>
            <person name="Thomas C.M."/>
            <person name="Parkhill J."/>
            <person name="Levy S.B."/>
            <person name="Rainey P.B."/>
            <person name="Thomson N.R."/>
        </authorList>
    </citation>
    <scope>NUCLEOTIDE SEQUENCE [LARGE SCALE GENOMIC DNA]</scope>
    <source>
        <strain>Pf0-1</strain>
    </source>
</reference>